<dbReference type="EC" id="1.8.4.8" evidence="1"/>
<dbReference type="EMBL" id="AM933173">
    <property type="protein sequence ID" value="CAR38657.1"/>
    <property type="molecule type" value="Genomic_DNA"/>
</dbReference>
<dbReference type="RefSeq" id="WP_000039870.1">
    <property type="nucleotide sequence ID" value="NC_011274.1"/>
</dbReference>
<dbReference type="SMR" id="B5RDR9"/>
<dbReference type="KEGG" id="seg:SG2849"/>
<dbReference type="HOGENOM" id="CLU_044089_3_0_6"/>
<dbReference type="UniPathway" id="UPA00140">
    <property type="reaction ID" value="UER00206"/>
</dbReference>
<dbReference type="Proteomes" id="UP000008321">
    <property type="component" value="Chromosome"/>
</dbReference>
<dbReference type="GO" id="GO:0005737">
    <property type="term" value="C:cytoplasm"/>
    <property type="evidence" value="ECO:0007669"/>
    <property type="project" value="UniProtKB-SubCell"/>
</dbReference>
<dbReference type="GO" id="GO:0004604">
    <property type="term" value="F:phosphoadenylyl-sulfate reductase (thioredoxin) activity"/>
    <property type="evidence" value="ECO:0007669"/>
    <property type="project" value="UniProtKB-UniRule"/>
</dbReference>
<dbReference type="GO" id="GO:0070814">
    <property type="term" value="P:hydrogen sulfide biosynthetic process"/>
    <property type="evidence" value="ECO:0007669"/>
    <property type="project" value="UniProtKB-UniRule"/>
</dbReference>
<dbReference type="GO" id="GO:0019379">
    <property type="term" value="P:sulfate assimilation, phosphoadenylyl sulfate reduction by phosphoadenylyl-sulfate reductase (thioredoxin)"/>
    <property type="evidence" value="ECO:0007669"/>
    <property type="project" value="UniProtKB-UniRule"/>
</dbReference>
<dbReference type="CDD" id="cd23945">
    <property type="entry name" value="PAPS_reductase"/>
    <property type="match status" value="1"/>
</dbReference>
<dbReference type="FunFam" id="3.40.50.620:FF:000043">
    <property type="entry name" value="Phosphoadenosine phosphosulfate reductase"/>
    <property type="match status" value="1"/>
</dbReference>
<dbReference type="Gene3D" id="3.40.50.620">
    <property type="entry name" value="HUPs"/>
    <property type="match status" value="1"/>
</dbReference>
<dbReference type="HAMAP" id="MF_00063">
    <property type="entry name" value="CysH"/>
    <property type="match status" value="1"/>
</dbReference>
<dbReference type="InterPro" id="IPR004511">
    <property type="entry name" value="PAPS/APS_Rdtase"/>
</dbReference>
<dbReference type="InterPro" id="IPR002500">
    <property type="entry name" value="PAPS_reduct_dom"/>
</dbReference>
<dbReference type="InterPro" id="IPR011800">
    <property type="entry name" value="PAPS_reductase_CysH"/>
</dbReference>
<dbReference type="InterPro" id="IPR014729">
    <property type="entry name" value="Rossmann-like_a/b/a_fold"/>
</dbReference>
<dbReference type="NCBIfam" id="TIGR00434">
    <property type="entry name" value="cysH"/>
    <property type="match status" value="1"/>
</dbReference>
<dbReference type="NCBIfam" id="TIGR02057">
    <property type="entry name" value="PAPS_reductase"/>
    <property type="match status" value="1"/>
</dbReference>
<dbReference type="NCBIfam" id="NF002537">
    <property type="entry name" value="PRK02090.1"/>
    <property type="match status" value="1"/>
</dbReference>
<dbReference type="PANTHER" id="PTHR46509">
    <property type="entry name" value="PHOSPHOADENOSINE PHOSPHOSULFATE REDUCTASE"/>
    <property type="match status" value="1"/>
</dbReference>
<dbReference type="PANTHER" id="PTHR46509:SF1">
    <property type="entry name" value="PHOSPHOADENOSINE PHOSPHOSULFATE REDUCTASE"/>
    <property type="match status" value="1"/>
</dbReference>
<dbReference type="Pfam" id="PF01507">
    <property type="entry name" value="PAPS_reduct"/>
    <property type="match status" value="1"/>
</dbReference>
<dbReference type="PIRSF" id="PIRSF000857">
    <property type="entry name" value="PAPS_reductase"/>
    <property type="match status" value="1"/>
</dbReference>
<dbReference type="SUPFAM" id="SSF52402">
    <property type="entry name" value="Adenine nucleotide alpha hydrolases-like"/>
    <property type="match status" value="1"/>
</dbReference>
<gene>
    <name evidence="1" type="primary">cysH</name>
    <name type="ordered locus">SG2849</name>
</gene>
<proteinExistence type="inferred from homology"/>
<organism>
    <name type="scientific">Salmonella gallinarum (strain 287/91 / NCTC 13346)</name>
    <dbReference type="NCBI Taxonomy" id="550538"/>
    <lineage>
        <taxon>Bacteria</taxon>
        <taxon>Pseudomonadati</taxon>
        <taxon>Pseudomonadota</taxon>
        <taxon>Gammaproteobacteria</taxon>
        <taxon>Enterobacterales</taxon>
        <taxon>Enterobacteriaceae</taxon>
        <taxon>Salmonella</taxon>
    </lineage>
</organism>
<protein>
    <recommendedName>
        <fullName evidence="1">Phosphoadenosine 5'-phosphosulfate reductase</fullName>
        <shortName evidence="1">PAPS reductase</shortName>
        <ecNumber evidence="1">1.8.4.8</ecNumber>
    </recommendedName>
    <alternativeName>
        <fullName evidence="1">3'-phosphoadenylylsulfate reductase</fullName>
    </alternativeName>
    <alternativeName>
        <fullName evidence="1">PAPS reductase, thioredoxin dependent</fullName>
    </alternativeName>
    <alternativeName>
        <fullName evidence="1">PAPS sulfotransferase</fullName>
    </alternativeName>
    <alternativeName>
        <fullName evidence="1">PAdoPS reductase</fullName>
    </alternativeName>
</protein>
<feature type="chain" id="PRO_1000092182" description="Phosphoadenosine 5'-phosphosulfate reductase">
    <location>
        <begin position="1"/>
        <end position="244"/>
    </location>
</feature>
<feature type="active site" description="Nucleophile; cysteine thiosulfonate intermediate" evidence="1">
    <location>
        <position position="239"/>
    </location>
</feature>
<accession>B5RDR9</accession>
<keyword id="KW-0963">Cytoplasm</keyword>
<keyword id="KW-0560">Oxidoreductase</keyword>
<sequence>MSKLDLNALNELPKVDRVLALAETNAQLETLTAEERVAWALENLPGEYVLSSSFGIQAAVSLHLVNQIRPDIPVILTDTGYLFPETYQFIDELTDKLKLNLKVYRAGESPAWQEARYGKLWEQGVEGIEKYNEINKVEPMNRALKELKAQTWFAGLRREQSGSRAHLPVLAIQRGVFKVLPIIDWDNRTVYQYLQKHGLKYHPLWDQGYLSVGDTHTTRKWEPGMAEEETRFFGLKRECGLHEG</sequence>
<evidence type="ECO:0000255" key="1">
    <source>
        <dbReference type="HAMAP-Rule" id="MF_00063"/>
    </source>
</evidence>
<name>CYSH_SALG2</name>
<comment type="function">
    <text evidence="1">Catalyzes the formation of sulfite from phosphoadenosine 5'-phosphosulfate (PAPS) using thioredoxin as an electron donor.</text>
</comment>
<comment type="catalytic activity">
    <reaction evidence="1">
        <text>[thioredoxin]-disulfide + sulfite + adenosine 3',5'-bisphosphate + 2 H(+) = [thioredoxin]-dithiol + 3'-phosphoadenylyl sulfate</text>
        <dbReference type="Rhea" id="RHEA:11724"/>
        <dbReference type="Rhea" id="RHEA-COMP:10698"/>
        <dbReference type="Rhea" id="RHEA-COMP:10700"/>
        <dbReference type="ChEBI" id="CHEBI:15378"/>
        <dbReference type="ChEBI" id="CHEBI:17359"/>
        <dbReference type="ChEBI" id="CHEBI:29950"/>
        <dbReference type="ChEBI" id="CHEBI:50058"/>
        <dbReference type="ChEBI" id="CHEBI:58339"/>
        <dbReference type="ChEBI" id="CHEBI:58343"/>
        <dbReference type="EC" id="1.8.4.8"/>
    </reaction>
</comment>
<comment type="pathway">
    <text evidence="1">Sulfur metabolism; hydrogen sulfide biosynthesis; sulfite from sulfate: step 3/3.</text>
</comment>
<comment type="subcellular location">
    <subcellularLocation>
        <location evidence="1">Cytoplasm</location>
    </subcellularLocation>
</comment>
<comment type="similarity">
    <text evidence="1">Belongs to the PAPS reductase family. CysH subfamily.</text>
</comment>
<reference key="1">
    <citation type="journal article" date="2008" name="Genome Res.">
        <title>Comparative genome analysis of Salmonella enteritidis PT4 and Salmonella gallinarum 287/91 provides insights into evolutionary and host adaptation pathways.</title>
        <authorList>
            <person name="Thomson N.R."/>
            <person name="Clayton D.J."/>
            <person name="Windhorst D."/>
            <person name="Vernikos G."/>
            <person name="Davidson S."/>
            <person name="Churcher C."/>
            <person name="Quail M.A."/>
            <person name="Stevens M."/>
            <person name="Jones M.A."/>
            <person name="Watson M."/>
            <person name="Barron A."/>
            <person name="Layton A."/>
            <person name="Pickard D."/>
            <person name="Kingsley R.A."/>
            <person name="Bignell A."/>
            <person name="Clark L."/>
            <person name="Harris B."/>
            <person name="Ormond D."/>
            <person name="Abdellah Z."/>
            <person name="Brooks K."/>
            <person name="Cherevach I."/>
            <person name="Chillingworth T."/>
            <person name="Woodward J."/>
            <person name="Norberczak H."/>
            <person name="Lord A."/>
            <person name="Arrowsmith C."/>
            <person name="Jagels K."/>
            <person name="Moule S."/>
            <person name="Mungall K."/>
            <person name="Saunders M."/>
            <person name="Whitehead S."/>
            <person name="Chabalgoity J.A."/>
            <person name="Maskell D."/>
            <person name="Humphreys T."/>
            <person name="Roberts M."/>
            <person name="Barrow P.A."/>
            <person name="Dougan G."/>
            <person name="Parkhill J."/>
        </authorList>
    </citation>
    <scope>NUCLEOTIDE SEQUENCE [LARGE SCALE GENOMIC DNA]</scope>
    <source>
        <strain>287/91 / NCTC 13346</strain>
    </source>
</reference>